<accession>B7V3V0</accession>
<sequence>MSDLLSRRLALLGAAANLPLLTECLHGIERECLRVDSDGKLALTPHPRALGSTLTHPQITTDYSEALLEFITPTETDVADTLADLERIHRFASSKLDGEYLWSPSMPCELPDEESIPIARYGSSLIGRLKYVYRKGLALRYGKTMQCIAGIHYNFSLPERLWPLLRQAEGSELSERDYQSAAYIALIRNFRRYSWLLMYLFGASPALDAGFLRGRPSQLERLDEHTLYLPYATSLRMSDLGYQNNAQAGLTPCYNDLQSYIDSLRQAVSTPYPPYEKVGTKQDGEWVQLNTNILQIENEYYSSIRPKRVTYTGERPVQALAARGVQYVEVRCLDINPFLPLGIDLDEARFLDAFLLFCAFSDSPLLNGECSDATDNFLAVVKEGRRPGLQLQRRGQPVELQVWANELLERIADTAALLDRARGGEAHAAALAAQRAKVADAELTPSAQVLKVMRERGESFEAFSLRQSREHAEYFRQHPLAAEEQARFEKMASDSLAEQTELERDQDGDFDTFVAAYQASILGLISN</sequence>
<proteinExistence type="inferred from homology"/>
<feature type="chain" id="PRO_1000129599" description="Glutamate--cysteine ligase">
    <location>
        <begin position="1"/>
        <end position="527"/>
    </location>
</feature>
<protein>
    <recommendedName>
        <fullName evidence="1">Glutamate--cysteine ligase</fullName>
        <ecNumber evidence="1">6.3.2.2</ecNumber>
    </recommendedName>
    <alternativeName>
        <fullName evidence="1">Gamma-ECS</fullName>
        <shortName evidence="1">GCS</shortName>
    </alternativeName>
    <alternativeName>
        <fullName evidence="1">Gamma-glutamylcysteine synthetase</fullName>
    </alternativeName>
</protein>
<reference key="1">
    <citation type="journal article" date="2009" name="Genome Res.">
        <title>Newly introduced genomic prophage islands are critical determinants of in vivo competitiveness in the Liverpool epidemic strain of Pseudomonas aeruginosa.</title>
        <authorList>
            <person name="Winstanley C."/>
            <person name="Langille M.G.I."/>
            <person name="Fothergill J.L."/>
            <person name="Kukavica-Ibrulj I."/>
            <person name="Paradis-Bleau C."/>
            <person name="Sanschagrin F."/>
            <person name="Thomson N.R."/>
            <person name="Winsor G.L."/>
            <person name="Quail M.A."/>
            <person name="Lennard N."/>
            <person name="Bignell A."/>
            <person name="Clarke L."/>
            <person name="Seeger K."/>
            <person name="Saunders D."/>
            <person name="Harris D."/>
            <person name="Parkhill J."/>
            <person name="Hancock R.E.W."/>
            <person name="Brinkman F.S.L."/>
            <person name="Levesque R.C."/>
        </authorList>
    </citation>
    <scope>NUCLEOTIDE SEQUENCE [LARGE SCALE GENOMIC DNA]</scope>
    <source>
        <strain>LESB58</strain>
    </source>
</reference>
<dbReference type="EC" id="6.3.2.2" evidence="1"/>
<dbReference type="EMBL" id="FM209186">
    <property type="protein sequence ID" value="CAW30351.1"/>
    <property type="molecule type" value="Genomic_DNA"/>
</dbReference>
<dbReference type="RefSeq" id="WP_009877231.1">
    <property type="nucleotide sequence ID" value="NC_011770.1"/>
</dbReference>
<dbReference type="SMR" id="B7V3V0"/>
<dbReference type="KEGG" id="pag:PLES_55971"/>
<dbReference type="HOGENOM" id="CLU_020728_3_0_6"/>
<dbReference type="UniPathway" id="UPA00142">
    <property type="reaction ID" value="UER00209"/>
</dbReference>
<dbReference type="GO" id="GO:0005829">
    <property type="term" value="C:cytosol"/>
    <property type="evidence" value="ECO:0007669"/>
    <property type="project" value="TreeGrafter"/>
</dbReference>
<dbReference type="GO" id="GO:0005524">
    <property type="term" value="F:ATP binding"/>
    <property type="evidence" value="ECO:0007669"/>
    <property type="project" value="UniProtKB-KW"/>
</dbReference>
<dbReference type="GO" id="GO:0004357">
    <property type="term" value="F:glutamate-cysteine ligase activity"/>
    <property type="evidence" value="ECO:0007669"/>
    <property type="project" value="UniProtKB-UniRule"/>
</dbReference>
<dbReference type="GO" id="GO:0046872">
    <property type="term" value="F:metal ion binding"/>
    <property type="evidence" value="ECO:0007669"/>
    <property type="project" value="TreeGrafter"/>
</dbReference>
<dbReference type="GO" id="GO:0006750">
    <property type="term" value="P:glutathione biosynthetic process"/>
    <property type="evidence" value="ECO:0007669"/>
    <property type="project" value="UniProtKB-UniRule"/>
</dbReference>
<dbReference type="FunFam" id="3.30.590.20:FF:000007">
    <property type="entry name" value="Glutamate--cysteine ligase"/>
    <property type="match status" value="1"/>
</dbReference>
<dbReference type="Gene3D" id="3.30.590.20">
    <property type="match status" value="1"/>
</dbReference>
<dbReference type="HAMAP" id="MF_00578">
    <property type="entry name" value="Glu_cys_ligase"/>
    <property type="match status" value="1"/>
</dbReference>
<dbReference type="InterPro" id="IPR014746">
    <property type="entry name" value="Gln_synth/guanido_kin_cat_dom"/>
</dbReference>
<dbReference type="InterPro" id="IPR007370">
    <property type="entry name" value="Glu_cys_ligase"/>
</dbReference>
<dbReference type="InterPro" id="IPR006334">
    <property type="entry name" value="Glut_cys_ligase"/>
</dbReference>
<dbReference type="NCBIfam" id="TIGR01434">
    <property type="entry name" value="glu_cys_ligase"/>
    <property type="match status" value="1"/>
</dbReference>
<dbReference type="PANTHER" id="PTHR38761">
    <property type="entry name" value="GLUTAMATE--CYSTEINE LIGASE"/>
    <property type="match status" value="1"/>
</dbReference>
<dbReference type="PANTHER" id="PTHR38761:SF1">
    <property type="entry name" value="GLUTAMATE--CYSTEINE LIGASE"/>
    <property type="match status" value="1"/>
</dbReference>
<dbReference type="Pfam" id="PF04262">
    <property type="entry name" value="Glu_cys_ligase"/>
    <property type="match status" value="1"/>
</dbReference>
<dbReference type="SUPFAM" id="SSF55931">
    <property type="entry name" value="Glutamine synthetase/guanido kinase"/>
    <property type="match status" value="1"/>
</dbReference>
<evidence type="ECO:0000255" key="1">
    <source>
        <dbReference type="HAMAP-Rule" id="MF_00578"/>
    </source>
</evidence>
<keyword id="KW-0067">ATP-binding</keyword>
<keyword id="KW-0317">Glutathione biosynthesis</keyword>
<keyword id="KW-0436">Ligase</keyword>
<keyword id="KW-0547">Nucleotide-binding</keyword>
<comment type="catalytic activity">
    <reaction evidence="1">
        <text>L-cysteine + L-glutamate + ATP = gamma-L-glutamyl-L-cysteine + ADP + phosphate + H(+)</text>
        <dbReference type="Rhea" id="RHEA:13285"/>
        <dbReference type="ChEBI" id="CHEBI:15378"/>
        <dbReference type="ChEBI" id="CHEBI:29985"/>
        <dbReference type="ChEBI" id="CHEBI:30616"/>
        <dbReference type="ChEBI" id="CHEBI:35235"/>
        <dbReference type="ChEBI" id="CHEBI:43474"/>
        <dbReference type="ChEBI" id="CHEBI:58173"/>
        <dbReference type="ChEBI" id="CHEBI:456216"/>
        <dbReference type="EC" id="6.3.2.2"/>
    </reaction>
</comment>
<comment type="pathway">
    <text evidence="1">Sulfur metabolism; glutathione biosynthesis; glutathione from L-cysteine and L-glutamate: step 1/2.</text>
</comment>
<comment type="similarity">
    <text evidence="1">Belongs to the glutamate--cysteine ligase type 1 family. Type 1 subfamily.</text>
</comment>
<gene>
    <name evidence="1" type="primary">gshA</name>
    <name type="ordered locus">PLES_55971</name>
</gene>
<name>GSH1_PSEA8</name>
<organism>
    <name type="scientific">Pseudomonas aeruginosa (strain LESB58)</name>
    <dbReference type="NCBI Taxonomy" id="557722"/>
    <lineage>
        <taxon>Bacteria</taxon>
        <taxon>Pseudomonadati</taxon>
        <taxon>Pseudomonadota</taxon>
        <taxon>Gammaproteobacteria</taxon>
        <taxon>Pseudomonadales</taxon>
        <taxon>Pseudomonadaceae</taxon>
        <taxon>Pseudomonas</taxon>
    </lineage>
</organism>